<organism>
    <name type="scientific">Homo sapiens</name>
    <name type="common">Human</name>
    <dbReference type="NCBI Taxonomy" id="9606"/>
    <lineage>
        <taxon>Eukaryota</taxon>
        <taxon>Metazoa</taxon>
        <taxon>Chordata</taxon>
        <taxon>Craniata</taxon>
        <taxon>Vertebrata</taxon>
        <taxon>Euteleostomi</taxon>
        <taxon>Mammalia</taxon>
        <taxon>Eutheria</taxon>
        <taxon>Euarchontoglires</taxon>
        <taxon>Primates</taxon>
        <taxon>Haplorrhini</taxon>
        <taxon>Catarrhini</taxon>
        <taxon>Hominidae</taxon>
        <taxon>Homo</taxon>
    </lineage>
</organism>
<reference key="1">
    <citation type="journal article" date="2008" name="Mol. Hum. Reprod.">
        <title>Fine-scale quantification of HCG beta gene transcription in human trophoblastic and non-malignant non-trophoblastic tissues.</title>
        <authorList>
            <person name="Rull K."/>
            <person name="Hallast P."/>
            <person name="Uuskula L."/>
            <person name="Jackson J."/>
            <person name="Punab M."/>
            <person name="Salumets A."/>
            <person name="Campbell R.K."/>
            <person name="Laan M."/>
        </authorList>
    </citation>
    <scope>NUCLEOTIDE SEQUENCE [MRNA] (ISOFORM 1)</scope>
    <scope>TISSUE SPECIFICITY</scope>
</reference>
<reference key="2">
    <citation type="journal article" date="2004" name="Nature">
        <title>The DNA sequence and biology of human chromosome 19.</title>
        <authorList>
            <person name="Grimwood J."/>
            <person name="Gordon L.A."/>
            <person name="Olsen A.S."/>
            <person name="Terry A."/>
            <person name="Schmutz J."/>
            <person name="Lamerdin J.E."/>
            <person name="Hellsten U."/>
            <person name="Goodstein D."/>
            <person name="Couronne O."/>
            <person name="Tran-Gyamfi M."/>
            <person name="Aerts A."/>
            <person name="Altherr M."/>
            <person name="Ashworth L."/>
            <person name="Bajorek E."/>
            <person name="Black S."/>
            <person name="Branscomb E."/>
            <person name="Caenepeel S."/>
            <person name="Carrano A.V."/>
            <person name="Caoile C."/>
            <person name="Chan Y.M."/>
            <person name="Christensen M."/>
            <person name="Cleland C.A."/>
            <person name="Copeland A."/>
            <person name="Dalin E."/>
            <person name="Dehal P."/>
            <person name="Denys M."/>
            <person name="Detter J.C."/>
            <person name="Escobar J."/>
            <person name="Flowers D."/>
            <person name="Fotopulos D."/>
            <person name="Garcia C."/>
            <person name="Georgescu A.M."/>
            <person name="Glavina T."/>
            <person name="Gomez M."/>
            <person name="Gonzales E."/>
            <person name="Groza M."/>
            <person name="Hammon N."/>
            <person name="Hawkins T."/>
            <person name="Haydu L."/>
            <person name="Ho I."/>
            <person name="Huang W."/>
            <person name="Israni S."/>
            <person name="Jett J."/>
            <person name="Kadner K."/>
            <person name="Kimball H."/>
            <person name="Kobayashi A."/>
            <person name="Larionov V."/>
            <person name="Leem S.-H."/>
            <person name="Lopez F."/>
            <person name="Lou Y."/>
            <person name="Lowry S."/>
            <person name="Malfatti S."/>
            <person name="Martinez D."/>
            <person name="McCready P.M."/>
            <person name="Medina C."/>
            <person name="Morgan J."/>
            <person name="Nelson K."/>
            <person name="Nolan M."/>
            <person name="Ovcharenko I."/>
            <person name="Pitluck S."/>
            <person name="Pollard M."/>
            <person name="Popkie A.P."/>
            <person name="Predki P."/>
            <person name="Quan G."/>
            <person name="Ramirez L."/>
            <person name="Rash S."/>
            <person name="Retterer J."/>
            <person name="Rodriguez A."/>
            <person name="Rogers S."/>
            <person name="Salamov A."/>
            <person name="Salazar A."/>
            <person name="She X."/>
            <person name="Smith D."/>
            <person name="Slezak T."/>
            <person name="Solovyev V."/>
            <person name="Thayer N."/>
            <person name="Tice H."/>
            <person name="Tsai M."/>
            <person name="Ustaszewska A."/>
            <person name="Vo N."/>
            <person name="Wagner M."/>
            <person name="Wheeler J."/>
            <person name="Wu K."/>
            <person name="Xie G."/>
            <person name="Yang J."/>
            <person name="Dubchak I."/>
            <person name="Furey T.S."/>
            <person name="DeJong P."/>
            <person name="Dickson M."/>
            <person name="Gordon D."/>
            <person name="Eichler E.E."/>
            <person name="Pennacchio L.A."/>
            <person name="Richardson P."/>
            <person name="Stubbs L."/>
            <person name="Rokhsar D.S."/>
            <person name="Myers R.M."/>
            <person name="Rubin E.M."/>
            <person name="Lucas S.M."/>
        </authorList>
    </citation>
    <scope>NUCLEOTIDE SEQUENCE [LARGE SCALE GENOMIC DNA]</scope>
</reference>
<reference key="3">
    <citation type="submission" date="2005-07" db="EMBL/GenBank/DDBJ databases">
        <authorList>
            <person name="Mural R.J."/>
            <person name="Istrail S."/>
            <person name="Sutton G.G."/>
            <person name="Florea L."/>
            <person name="Halpern A.L."/>
            <person name="Mobarry C.M."/>
            <person name="Lippert R."/>
            <person name="Walenz B."/>
            <person name="Shatkay H."/>
            <person name="Dew I."/>
            <person name="Miller J.R."/>
            <person name="Flanigan M.J."/>
            <person name="Edwards N.J."/>
            <person name="Bolanos R."/>
            <person name="Fasulo D."/>
            <person name="Halldorsson B.V."/>
            <person name="Hannenhalli S."/>
            <person name="Turner R."/>
            <person name="Yooseph S."/>
            <person name="Lu F."/>
            <person name="Nusskern D.R."/>
            <person name="Shue B.C."/>
            <person name="Zheng X.H."/>
            <person name="Zhong F."/>
            <person name="Delcher A.L."/>
            <person name="Huson D.H."/>
            <person name="Kravitz S.A."/>
            <person name="Mouchard L."/>
            <person name="Reinert K."/>
            <person name="Remington K.A."/>
            <person name="Clark A.G."/>
            <person name="Waterman M.S."/>
            <person name="Eichler E.E."/>
            <person name="Adams M.D."/>
            <person name="Hunkapiller M.W."/>
            <person name="Myers E.W."/>
            <person name="Venter J.C."/>
        </authorList>
    </citation>
    <scope>NUCLEOTIDE SEQUENCE [LARGE SCALE GENOMIC DNA]</scope>
</reference>
<reference key="4">
    <citation type="journal article" date="2004" name="Genome Res.">
        <title>The status, quality, and expansion of the NIH full-length cDNA project: the Mammalian Gene Collection (MGC).</title>
        <authorList>
            <consortium name="The MGC Project Team"/>
        </authorList>
    </citation>
    <scope>NUCLEOTIDE SEQUENCE [LARGE SCALE MRNA] OF 1-183 (ISOFORM 2)</scope>
</reference>
<reference key="5">
    <citation type="journal article" date="2002" name="Mol. Biol. Evol.">
        <title>Chorionic gonadotropin has a recent origin within primates and an evolutionary history of selection.</title>
        <authorList>
            <person name="Maston G.A."/>
            <person name="Ruvolo M."/>
        </authorList>
    </citation>
    <scope>MISCELLANEOUS</scope>
</reference>
<reference key="6">
    <citation type="journal article" date="2005" name="Hum. Reprod.">
        <title>Expression of beta-subunit of HCG genes during normal and failed pregnancy.</title>
        <authorList>
            <person name="Rull K."/>
            <person name="Laan M."/>
        </authorList>
    </citation>
    <scope>TISSUE SPECIFICITY</scope>
</reference>
<name>CGB1_HUMAN</name>
<evidence type="ECO:0000250" key="1"/>
<evidence type="ECO:0000255" key="2"/>
<evidence type="ECO:0000256" key="3">
    <source>
        <dbReference type="SAM" id="MobiDB-lite"/>
    </source>
</evidence>
<evidence type="ECO:0000269" key="4">
    <source>
    </source>
</evidence>
<evidence type="ECO:0000269" key="5">
    <source>
    </source>
</evidence>
<evidence type="ECO:0000269" key="6">
    <source>
    </source>
</evidence>
<evidence type="ECO:0000303" key="7">
    <source>
    </source>
</evidence>
<evidence type="ECO:0000305" key="8"/>
<proteinExistence type="evidence at transcript level"/>
<accession>A6NKQ9</accession>
<accession>A4FVC8</accession>
<accession>A8MUK6</accession>
<dbReference type="EMBL" id="AC008687">
    <property type="status" value="NOT_ANNOTATED_CDS"/>
    <property type="molecule type" value="Genomic_DNA"/>
</dbReference>
<dbReference type="EMBL" id="CH471177">
    <property type="protein sequence ID" value="EAW52436.1"/>
    <property type="molecule type" value="Genomic_DNA"/>
</dbReference>
<dbReference type="EMBL" id="BC126460">
    <property type="protein sequence ID" value="AAI26461.1"/>
    <property type="molecule type" value="mRNA"/>
</dbReference>
<dbReference type="CCDS" id="CCDS12751.2">
    <molecule id="A6NKQ9-2"/>
</dbReference>
<dbReference type="RefSeq" id="NP_203695.2">
    <molecule id="A6NKQ9-2"/>
    <property type="nucleotide sequence ID" value="NM_033377.2"/>
</dbReference>
<dbReference type="SMR" id="A6NKQ9"/>
<dbReference type="BioGRID" id="125315">
    <property type="interactions" value="10"/>
</dbReference>
<dbReference type="FunCoup" id="A6NKQ9">
    <property type="interactions" value="109"/>
</dbReference>
<dbReference type="IntAct" id="A6NKQ9">
    <property type="interactions" value="3"/>
</dbReference>
<dbReference type="MINT" id="A6NKQ9"/>
<dbReference type="GlyCosmos" id="A6NKQ9">
    <property type="glycosylation" value="2 sites, No reported glycans"/>
</dbReference>
<dbReference type="GlyGen" id="A6NKQ9">
    <property type="glycosylation" value="3 sites, 1 O-linked glycan (1 site)"/>
</dbReference>
<dbReference type="iPTMnet" id="A6NKQ9"/>
<dbReference type="PhosphoSitePlus" id="A6NKQ9"/>
<dbReference type="BioMuta" id="CGB1"/>
<dbReference type="jPOST" id="A6NKQ9"/>
<dbReference type="MassIVE" id="A6NKQ9"/>
<dbReference type="PeptideAtlas" id="A6NKQ9"/>
<dbReference type="Antibodypedia" id="76915">
    <property type="antibodies" value="55 antibodies from 8 providers"/>
</dbReference>
<dbReference type="DNASU" id="114335"/>
<dbReference type="Ensembl" id="ENST00000301407.8">
    <molecule id="A6NKQ9-2"/>
    <property type="protein sequence ID" value="ENSP00000301407.6"/>
    <property type="gene ID" value="ENSG00000267631.5"/>
</dbReference>
<dbReference type="GeneID" id="114335"/>
<dbReference type="KEGG" id="hsa:114335"/>
<dbReference type="MANE-Select" id="ENST00000301407.8">
    <molecule id="A6NKQ9-2"/>
    <property type="protein sequence ID" value="ENSP00000301407.6"/>
    <property type="RefSeq nucleotide sequence ID" value="NM_033377.2"/>
    <property type="RefSeq protein sequence ID" value="NP_203695.2"/>
</dbReference>
<dbReference type="UCSC" id="uc002plx.4">
    <molecule id="A6NKQ9-1"/>
    <property type="organism name" value="human"/>
</dbReference>
<dbReference type="AGR" id="HGNC:16721"/>
<dbReference type="CTD" id="114335"/>
<dbReference type="DisGeNET" id="114335"/>
<dbReference type="GeneCards" id="CGB1"/>
<dbReference type="HGNC" id="HGNC:16721">
    <property type="gene designation" value="CGB1"/>
</dbReference>
<dbReference type="HPA" id="ENSG00000267631">
    <property type="expression patterns" value="Group enriched (pancreas, pituitary gland)"/>
</dbReference>
<dbReference type="MIM" id="608823">
    <property type="type" value="gene"/>
</dbReference>
<dbReference type="neXtProt" id="NX_A6NKQ9"/>
<dbReference type="OpenTargets" id="ENSG00000267631"/>
<dbReference type="PharmGKB" id="PA26435"/>
<dbReference type="VEuPathDB" id="HostDB:ENSG00000267631"/>
<dbReference type="GeneTree" id="ENSGT00940000163162"/>
<dbReference type="InParanoid" id="A6NKQ9"/>
<dbReference type="OrthoDB" id="9525526at2759"/>
<dbReference type="PAN-GO" id="A6NKQ9">
    <property type="GO annotations" value="3 GO annotations based on evolutionary models"/>
</dbReference>
<dbReference type="TreeFam" id="TF332940"/>
<dbReference type="PathwayCommons" id="A6NKQ9"/>
<dbReference type="SignaLink" id="A6NKQ9"/>
<dbReference type="BioGRID-ORCS" id="114335">
    <property type="hits" value="14 hits in 317 CRISPR screens"/>
</dbReference>
<dbReference type="GeneWiki" id="CGB1"/>
<dbReference type="GenomeRNAi" id="114335"/>
<dbReference type="Pharos" id="A6NKQ9">
    <property type="development level" value="Tdark"/>
</dbReference>
<dbReference type="PRO" id="PR:A6NKQ9"/>
<dbReference type="Proteomes" id="UP000005640">
    <property type="component" value="Chromosome 19"/>
</dbReference>
<dbReference type="RNAct" id="A6NKQ9">
    <property type="molecule type" value="protein"/>
</dbReference>
<dbReference type="Bgee" id="ENSG00000267631">
    <property type="expression patterns" value="Expressed in male germ line stem cell (sensu Vertebrata) in testis and 49 other cell types or tissues"/>
</dbReference>
<dbReference type="ExpressionAtlas" id="A6NKQ9">
    <property type="expression patterns" value="baseline"/>
</dbReference>
<dbReference type="GO" id="GO:0005737">
    <property type="term" value="C:cytoplasm"/>
    <property type="evidence" value="ECO:0000318"/>
    <property type="project" value="GO_Central"/>
</dbReference>
<dbReference type="GO" id="GO:0005615">
    <property type="term" value="C:extracellular space"/>
    <property type="evidence" value="ECO:0000318"/>
    <property type="project" value="GO_Central"/>
</dbReference>
<dbReference type="GO" id="GO:0005179">
    <property type="term" value="F:hormone activity"/>
    <property type="evidence" value="ECO:0000315"/>
    <property type="project" value="AgBase"/>
</dbReference>
<dbReference type="GO" id="GO:0007186">
    <property type="term" value="P:G protein-coupled receptor signaling pathway"/>
    <property type="evidence" value="ECO:0000318"/>
    <property type="project" value="GO_Central"/>
</dbReference>
<dbReference type="CDD" id="cd00069">
    <property type="entry name" value="GHB_like"/>
    <property type="match status" value="1"/>
</dbReference>
<dbReference type="FunFam" id="2.10.90.10:FF:000007">
    <property type="entry name" value="Luteinizing hormone beta subunit"/>
    <property type="match status" value="1"/>
</dbReference>
<dbReference type="Gene3D" id="2.10.90.10">
    <property type="entry name" value="Cystine-knot cytokines"/>
    <property type="match status" value="1"/>
</dbReference>
<dbReference type="InterPro" id="IPR029034">
    <property type="entry name" value="Cystine-knot_cytokine"/>
</dbReference>
<dbReference type="InterPro" id="IPR006208">
    <property type="entry name" value="Glyco_hormone_CN"/>
</dbReference>
<dbReference type="InterPro" id="IPR001545">
    <property type="entry name" value="Gonadotropin_bsu"/>
</dbReference>
<dbReference type="InterPro" id="IPR018245">
    <property type="entry name" value="Gonadotropin_bsu_CS"/>
</dbReference>
<dbReference type="PANTHER" id="PTHR11515:SF25">
    <property type="entry name" value="CHORIOGONADOTROPIN SUBUNIT BETA 3-RELATED"/>
    <property type="match status" value="1"/>
</dbReference>
<dbReference type="PANTHER" id="PTHR11515">
    <property type="entry name" value="GLYCOPROTEIN HORMONE BETA CHAIN"/>
    <property type="match status" value="1"/>
</dbReference>
<dbReference type="Pfam" id="PF00007">
    <property type="entry name" value="Cys_knot"/>
    <property type="match status" value="1"/>
</dbReference>
<dbReference type="SMART" id="SM00068">
    <property type="entry name" value="GHB"/>
    <property type="match status" value="1"/>
</dbReference>
<dbReference type="SUPFAM" id="SSF57501">
    <property type="entry name" value="Cystine-knot cytokines"/>
    <property type="match status" value="1"/>
</dbReference>
<dbReference type="PROSITE" id="PS00261">
    <property type="entry name" value="GLYCO_HORMONE_BETA_1"/>
    <property type="match status" value="1"/>
</dbReference>
<dbReference type="PROSITE" id="PS00689">
    <property type="entry name" value="GLYCO_HORMONE_BETA_2"/>
    <property type="match status" value="1"/>
</dbReference>
<sequence>MSTFPVLAEDIPLRERHVKGRVDPHFRAPKMEMFQRLLLLLLLSMGGTWASKEPLRPRCRPINATLAVEKEGCPVCITVNTTICAGYCPTMTRVLQGVLPALPQVVCNYRDVRFESIRLPGCPRGVNPVVSYAVALSCQCALCRRSTTDCGGPKDHPLTCDDPRFQDSSSSKAPPPSLPSPSRLPGP</sequence>
<feature type="signal peptide" evidence="2">
    <location>
        <begin position="1"/>
        <end position="50"/>
    </location>
</feature>
<feature type="chain" id="PRO_0000342548" description="Choriogonadotropin subunit beta variant 1">
    <location>
        <begin position="51"/>
        <end position="187"/>
    </location>
</feature>
<feature type="region of interest" description="Disordered" evidence="3">
    <location>
        <begin position="161"/>
        <end position="187"/>
    </location>
</feature>
<feature type="compositionally biased region" description="Pro residues" evidence="3">
    <location>
        <begin position="173"/>
        <end position="187"/>
    </location>
</feature>
<feature type="glycosylation site" description="N-linked (GlcNAc...) asparagine" evidence="2">
    <location>
        <position position="63"/>
    </location>
</feature>
<feature type="glycosylation site" description="N-linked (GlcNAc...) asparagine" evidence="2">
    <location>
        <position position="80"/>
    </location>
</feature>
<feature type="disulfide bond" evidence="1">
    <location>
        <begin position="59"/>
        <end position="107"/>
    </location>
</feature>
<feature type="disulfide bond" evidence="1">
    <location>
        <begin position="73"/>
        <end position="122"/>
    </location>
</feature>
<feature type="disulfide bond" evidence="1">
    <location>
        <begin position="76"/>
        <end position="160"/>
    </location>
</feature>
<feature type="disulfide bond" evidence="1">
    <location>
        <begin position="84"/>
        <end position="138"/>
    </location>
</feature>
<feature type="disulfide bond" evidence="1">
    <location>
        <begin position="88"/>
        <end position="140"/>
    </location>
</feature>
<feature type="disulfide bond" evidence="1">
    <location>
        <begin position="143"/>
        <end position="150"/>
    </location>
</feature>
<feature type="splice variant" id="VSP_034490" description="In isoform 2." evidence="7">
    <location>
        <begin position="1"/>
        <end position="32"/>
    </location>
</feature>
<feature type="splice variant" id="VSP_034491" description="In isoform 2." evidence="7">
    <original>MFQ</original>
    <variation>MSK</variation>
    <location>
        <begin position="33"/>
        <end position="35"/>
    </location>
</feature>
<feature type="sequence variant" id="VAR_055838" description="In dbSNP:rs35371968.">
    <original>P</original>
    <variation>S</variation>
    <location>
        <position position="185"/>
    </location>
</feature>
<protein>
    <recommendedName>
        <fullName>Choriogonadotropin subunit beta variant 1</fullName>
    </recommendedName>
</protein>
<comment type="subcellular location">
    <subcellularLocation>
        <location>Secreted</location>
    </subcellularLocation>
</comment>
<comment type="alternative products">
    <event type="alternative splicing"/>
    <isoform>
        <id>A6NKQ9-1</id>
        <name>1</name>
        <sequence type="displayed"/>
    </isoform>
    <isoform>
        <id>A6NKQ9-2</id>
        <name>2</name>
        <sequence type="described" ref="VSP_034490 VSP_034491"/>
    </isoform>
</comment>
<comment type="tissue specificity">
    <text evidence="5 6">Expressed in placenta, testis and pituitary.</text>
</comment>
<comment type="miscellaneous">
    <text evidence="4">Encoded by a cluster of genes that have evolved by duplication from LHB. HCG-beta is encoded by six non-allelic genes (CGB) clustered on chromosome 19q13.3 and named CGB1, CGB2, CGB3, CGB5, CGB7 and CGB8. Two specific hCGb proteins that differ by three amino acids in positions 2,4 and 117 have been described: type 1 (CGB7) and type 2 (CGB3, CGB5, CGB8). The CGB gene first arose in the common ancestor of the anthropoid primates.</text>
</comment>
<comment type="similarity">
    <text evidence="8">Belongs to the glycoprotein hormones subunit beta family.</text>
</comment>
<gene>
    <name type="primary">CGB1</name>
</gene>
<keyword id="KW-0025">Alternative splicing</keyword>
<keyword id="KW-1015">Disulfide bond</keyword>
<keyword id="KW-0325">Glycoprotein</keyword>
<keyword id="KW-0372">Hormone</keyword>
<keyword id="KW-1185">Reference proteome</keyword>
<keyword id="KW-0964">Secreted</keyword>
<keyword id="KW-0732">Signal</keyword>